<keyword id="KW-0963">Cytoplasm</keyword>
<keyword id="KW-0378">Hydrolase</keyword>
<keyword id="KW-0444">Lipid biosynthesis</keyword>
<keyword id="KW-0443">Lipid metabolism</keyword>
<keyword id="KW-1185">Reference proteome</keyword>
<dbReference type="EC" id="3.1.3.4"/>
<dbReference type="EMBL" id="FJ591133">
    <property type="protein sequence ID" value="ACT37431.1"/>
    <property type="status" value="ALT_SEQ"/>
    <property type="molecule type" value="mRNA"/>
</dbReference>
<dbReference type="EMBL" id="AC016661">
    <property type="protein sequence ID" value="AAF23287.1"/>
    <property type="molecule type" value="Genomic_DNA"/>
</dbReference>
<dbReference type="EMBL" id="CP002686">
    <property type="protein sequence ID" value="AEE74780.1"/>
    <property type="molecule type" value="Genomic_DNA"/>
</dbReference>
<dbReference type="EMBL" id="CP002686">
    <property type="protein sequence ID" value="AEE74781.1"/>
    <property type="molecule type" value="Genomic_DNA"/>
</dbReference>
<dbReference type="EMBL" id="CP002686">
    <property type="protein sequence ID" value="AEE74782.1"/>
    <property type="molecule type" value="Genomic_DNA"/>
</dbReference>
<dbReference type="EMBL" id="CP002686">
    <property type="protein sequence ID" value="ANM64193.1"/>
    <property type="molecule type" value="Genomic_DNA"/>
</dbReference>
<dbReference type="EMBL" id="AK229489">
    <property type="protein sequence ID" value="BAF01347.1"/>
    <property type="molecule type" value="mRNA"/>
</dbReference>
<dbReference type="RefSeq" id="NP_001118604.1">
    <property type="nucleotide sequence ID" value="NM_001125132.1"/>
</dbReference>
<dbReference type="RefSeq" id="NP_001326239.1">
    <property type="nucleotide sequence ID" value="NM_001337827.1"/>
</dbReference>
<dbReference type="RefSeq" id="NP_187567.1">
    <property type="nucleotide sequence ID" value="NM_111790.4"/>
</dbReference>
<dbReference type="RefSeq" id="NP_974268.1">
    <property type="nucleotide sequence ID" value="NM_202539.2"/>
</dbReference>
<dbReference type="SMR" id="Q9SF47"/>
<dbReference type="FunCoup" id="Q9SF47">
    <property type="interactions" value="2722"/>
</dbReference>
<dbReference type="IntAct" id="Q9SF47">
    <property type="interactions" value="1"/>
</dbReference>
<dbReference type="STRING" id="3702.Q9SF47"/>
<dbReference type="GlyGen" id="Q9SF47">
    <property type="glycosylation" value="1 site"/>
</dbReference>
<dbReference type="iPTMnet" id="Q9SF47"/>
<dbReference type="PaxDb" id="3702-AT3G09560.1"/>
<dbReference type="ProMEX" id="Q9SF47"/>
<dbReference type="ProteomicsDB" id="248653"/>
<dbReference type="EnsemblPlants" id="AT3G09560.1">
    <property type="protein sequence ID" value="AT3G09560.1"/>
    <property type="gene ID" value="AT3G09560"/>
</dbReference>
<dbReference type="EnsemblPlants" id="AT3G09560.2">
    <property type="protein sequence ID" value="AT3G09560.2"/>
    <property type="gene ID" value="AT3G09560"/>
</dbReference>
<dbReference type="EnsemblPlants" id="AT3G09560.3">
    <property type="protein sequence ID" value="AT3G09560.3"/>
    <property type="gene ID" value="AT3G09560"/>
</dbReference>
<dbReference type="EnsemblPlants" id="AT3G09560.4">
    <property type="protein sequence ID" value="AT3G09560.4"/>
    <property type="gene ID" value="AT3G09560"/>
</dbReference>
<dbReference type="GeneID" id="820113"/>
<dbReference type="Gramene" id="AT3G09560.1">
    <property type="protein sequence ID" value="AT3G09560.1"/>
    <property type="gene ID" value="AT3G09560"/>
</dbReference>
<dbReference type="Gramene" id="AT3G09560.2">
    <property type="protein sequence ID" value="AT3G09560.2"/>
    <property type="gene ID" value="AT3G09560"/>
</dbReference>
<dbReference type="Gramene" id="AT3G09560.3">
    <property type="protein sequence ID" value="AT3G09560.3"/>
    <property type="gene ID" value="AT3G09560"/>
</dbReference>
<dbReference type="Gramene" id="AT3G09560.4">
    <property type="protein sequence ID" value="AT3G09560.4"/>
    <property type="gene ID" value="AT3G09560"/>
</dbReference>
<dbReference type="KEGG" id="ath:AT3G09560"/>
<dbReference type="Araport" id="AT3G09560"/>
<dbReference type="TAIR" id="AT3G09560">
    <property type="gene designation" value="PAH1"/>
</dbReference>
<dbReference type="eggNOG" id="KOG2116">
    <property type="taxonomic scope" value="Eukaryota"/>
</dbReference>
<dbReference type="HOGENOM" id="CLU_002546_1_0_1"/>
<dbReference type="InParanoid" id="Q9SF47"/>
<dbReference type="OMA" id="NFCTEHI"/>
<dbReference type="PhylomeDB" id="Q9SF47"/>
<dbReference type="BioCyc" id="ARA:MONOMER-AT3G09560"/>
<dbReference type="BRENDA" id="3.1.3.4">
    <property type="organism ID" value="399"/>
</dbReference>
<dbReference type="PRO" id="PR:Q9SF47"/>
<dbReference type="Proteomes" id="UP000006548">
    <property type="component" value="Chromosome 3"/>
</dbReference>
<dbReference type="ExpressionAtlas" id="Q9SF47">
    <property type="expression patterns" value="baseline and differential"/>
</dbReference>
<dbReference type="GO" id="GO:0005829">
    <property type="term" value="C:cytosol"/>
    <property type="evidence" value="ECO:0007669"/>
    <property type="project" value="UniProtKB-SubCell"/>
</dbReference>
<dbReference type="GO" id="GO:0000139">
    <property type="term" value="C:Golgi membrane"/>
    <property type="evidence" value="ECO:0000314"/>
    <property type="project" value="UniProtKB"/>
</dbReference>
<dbReference type="GO" id="GO:0032586">
    <property type="term" value="C:protein storage vacuole membrane"/>
    <property type="evidence" value="ECO:0000314"/>
    <property type="project" value="UniProtKB"/>
</dbReference>
<dbReference type="GO" id="GO:0008195">
    <property type="term" value="F:phosphatidate phosphatase activity"/>
    <property type="evidence" value="ECO:0007669"/>
    <property type="project" value="UniProtKB-EC"/>
</dbReference>
<dbReference type="GO" id="GO:0016036">
    <property type="term" value="P:cellular response to phosphate starvation"/>
    <property type="evidence" value="ECO:0000316"/>
    <property type="project" value="TAIR"/>
</dbReference>
<dbReference type="GO" id="GO:0019375">
    <property type="term" value="P:galactolipid biosynthetic process"/>
    <property type="evidence" value="ECO:0000316"/>
    <property type="project" value="TAIR"/>
</dbReference>
<dbReference type="GO" id="GO:0006886">
    <property type="term" value="P:intracellular protein transport"/>
    <property type="evidence" value="ECO:0000314"/>
    <property type="project" value="UniProtKB"/>
</dbReference>
<dbReference type="GO" id="GO:0006629">
    <property type="term" value="P:lipid metabolic process"/>
    <property type="evidence" value="ECO:0000316"/>
    <property type="project" value="TAIR"/>
</dbReference>
<dbReference type="GO" id="GO:0008654">
    <property type="term" value="P:phospholipid biosynthetic process"/>
    <property type="evidence" value="ECO:0000316"/>
    <property type="project" value="TAIR"/>
</dbReference>
<dbReference type="InterPro" id="IPR036412">
    <property type="entry name" value="HAD-like_sf"/>
</dbReference>
<dbReference type="InterPro" id="IPR026058">
    <property type="entry name" value="LIPIN"/>
</dbReference>
<dbReference type="InterPro" id="IPR031703">
    <property type="entry name" value="Lipin_mid"/>
</dbReference>
<dbReference type="InterPro" id="IPR007651">
    <property type="entry name" value="Lipin_N"/>
</dbReference>
<dbReference type="InterPro" id="IPR013209">
    <property type="entry name" value="LNS2"/>
</dbReference>
<dbReference type="InterPro" id="IPR031315">
    <property type="entry name" value="LNS2/PITP"/>
</dbReference>
<dbReference type="PANTHER" id="PTHR12181">
    <property type="entry name" value="LIPIN"/>
    <property type="match status" value="1"/>
</dbReference>
<dbReference type="PANTHER" id="PTHR12181:SF59">
    <property type="entry name" value="PHOSPHATIDATE PHOSPHATASE PAH1"/>
    <property type="match status" value="1"/>
</dbReference>
<dbReference type="Pfam" id="PF16876">
    <property type="entry name" value="Lipin_mid"/>
    <property type="match status" value="1"/>
</dbReference>
<dbReference type="Pfam" id="PF04571">
    <property type="entry name" value="Lipin_N"/>
    <property type="match status" value="1"/>
</dbReference>
<dbReference type="Pfam" id="PF08235">
    <property type="entry name" value="LNS2"/>
    <property type="match status" value="1"/>
</dbReference>
<dbReference type="SMART" id="SM00775">
    <property type="entry name" value="LNS2"/>
    <property type="match status" value="1"/>
</dbReference>
<dbReference type="SUPFAM" id="SSF56784">
    <property type="entry name" value="HAD-like"/>
    <property type="match status" value="1"/>
</dbReference>
<protein>
    <recommendedName>
        <fullName>Phosphatidate phosphatase PAH1</fullName>
        <ecNumber>3.1.3.4</ecNumber>
    </recommendedName>
    <alternativeName>
        <fullName>Phosphatidic acid phosphohydrolase 1</fullName>
        <shortName>AtPAH1</shortName>
    </alternativeName>
</protein>
<name>PAH1_ARATH</name>
<sequence length="904" mass="101003">MSLVGRVGSLISQGVYSVATPFHPFGGAIDVIVVQQQDGSFRSTPWYVRFGKFQGVLKGAEKFVRISVNGTEADFHMYLDNSGEAYFIREVDPAANDTNNLISGSENNNGNQNNGVTYRLEHSLSDSGTGELREGFDPLSRLERTESDCNRRFYDFQDDPPSPTSEYGSARFDNLNVESYGDSQGSDSEVVLVSIDGHILTAPVSVAEQEAENLRLNTPQFHLAPGDGTEFCEGNTEFASSETPWDTEYIDKVEESSDTANIASDKVDAINDERNDLDSHSRDNAEKDSHDAERDLLGSCLEQSELTKTSENVKSEEPGPTFEDRNLKEGEFPLRTIMENDRSEDEVTIESIDTLVDSFESSTTQITIEEVKTTEGSRISVDSNADSECKDEQTSAETAILFNNQESSISVDSNADSECKDEQPRISAETAILINNQEGGIIESEDQDSERVSIDSTREEVDKDNEDRKTVVSVGVTSSVDEGEPDTDQRYELSLCKDELRQGMGLSAAAEVFDAHMISKEEYINSATSILESENLVVRIRETYMPWTKAARIVLGKAVFDLDLDIQPDDVISVEENESPKPKDDETTITPSSSGTRWRLWPIPFRRVKTVEHTGSNSSSEEDLFVDSEPGLQNSPETQSTTESRHESPRRQLVRTNVPTNEQIASLNLKDGQNMITFSFSTRVLGTQQVDAHIYRWRWDTKIVISDVDGTITKSDVLGQFMPFIGKDWTQSGVAKLFSAIKENGYQLLFLSARAIVQAYLTRNFLNNLKQDGKALPTGPVVISPDGLFPALYREVIRRAPHEFKIACLEDIRKLFPTDYNPFYAGFGNRDTDELSYRKLGIPKGKIFIINPKGEVATGHRIDVKKSYTSLHTLVNDMFPPTSLVEQEDYNPWNFWKLPIEEVE</sequence>
<feature type="chain" id="PRO_0000425528" description="Phosphatidate phosphatase PAH1">
    <location>
        <begin position="1"/>
        <end position="904"/>
    </location>
</feature>
<feature type="region of interest" description="N-LIP">
    <location>
        <begin position="1"/>
        <end position="112"/>
    </location>
</feature>
<feature type="region of interest" description="Disordered" evidence="1">
    <location>
        <begin position="254"/>
        <end position="293"/>
    </location>
</feature>
<feature type="region of interest" description="Disordered" evidence="1">
    <location>
        <begin position="305"/>
        <end position="326"/>
    </location>
</feature>
<feature type="region of interest" description="Disordered" evidence="1">
    <location>
        <begin position="440"/>
        <end position="470"/>
    </location>
</feature>
<feature type="region of interest" description="Disordered" evidence="1">
    <location>
        <begin position="574"/>
        <end position="595"/>
    </location>
</feature>
<feature type="region of interest" description="Disordered" evidence="1">
    <location>
        <begin position="612"/>
        <end position="655"/>
    </location>
</feature>
<feature type="region of interest" description="C-LIP">
    <location>
        <begin position="703"/>
        <end position="857"/>
    </location>
</feature>
<feature type="short sequence motif" description="DXDXT motif">
    <location>
        <begin position="707"/>
        <end position="711"/>
    </location>
</feature>
<feature type="compositionally biased region" description="Basic and acidic residues" evidence="1">
    <location>
        <begin position="265"/>
        <end position="293"/>
    </location>
</feature>
<feature type="compositionally biased region" description="Basic and acidic residues" evidence="1">
    <location>
        <begin position="311"/>
        <end position="326"/>
    </location>
</feature>
<feature type="compositionally biased region" description="Basic and acidic residues" evidence="1">
    <location>
        <begin position="449"/>
        <end position="470"/>
    </location>
</feature>
<feature type="compositionally biased region" description="Polar residues" evidence="1">
    <location>
        <begin position="631"/>
        <end position="642"/>
    </location>
</feature>
<feature type="mutagenesis site" description="Reduces activity 3-fold." evidence="4">
    <original>G</original>
    <variation>A</variation>
    <location>
        <position position="83"/>
    </location>
</feature>
<feature type="mutagenesis site" description="Loss of activity." evidence="4">
    <original>D</original>
    <variation>A</variation>
    <location>
        <position position="707"/>
    </location>
</feature>
<feature type="mutagenesis site" description="Loss of activity." evidence="4">
    <original>D</original>
    <variation>A</variation>
    <location>
        <position position="709"/>
    </location>
</feature>
<feature type="mutagenesis site" description="Loss of activity." evidence="4">
    <original>S</original>
    <variation>A</variation>
    <location>
        <position position="752"/>
    </location>
</feature>
<feature type="sequence conflict" description="In Ref. 4; BAF01347." evidence="5" ref="4">
    <original>Q</original>
    <variation>R</variation>
    <location>
        <position position="663"/>
    </location>
</feature>
<feature type="sequence conflict" description="In Ref. 4; BAF01347." evidence="5" ref="4">
    <original>L</original>
    <variation>F</variation>
    <location>
        <position position="884"/>
    </location>
</feature>
<reference key="1">
    <citation type="journal article" date="2010" name="Plant Cell">
        <title>Phosphatidic acid phosphohydrolase 1 and 2 regulate phospholipid synthesis at the endoplasmic reticulum in Arabidopsis.</title>
        <authorList>
            <person name="Eastmond P.J."/>
            <person name="Quettier A.L."/>
            <person name="Kroon J.T."/>
            <person name="Craddock C."/>
            <person name="Adams N."/>
            <person name="Slabas A.R."/>
        </authorList>
    </citation>
    <scope>NUCLEOTIDE SEQUENCE [MRNA]</scope>
    <scope>FUNCTION</scope>
    <scope>IDENTIFICATION BY MASS SPECTROMETRY</scope>
    <scope>COFACTOR</scope>
    <scope>BIOPHYSICOCHEMICAL PROPERTIES</scope>
    <scope>TISSUE SPECIFICITY</scope>
    <scope>DISRUPTION PHENOTYPE</scope>
</reference>
<reference key="2">
    <citation type="journal article" date="2000" name="Nature">
        <title>Sequence and analysis of chromosome 3 of the plant Arabidopsis thaliana.</title>
        <authorList>
            <person name="Salanoubat M."/>
            <person name="Lemcke K."/>
            <person name="Rieger M."/>
            <person name="Ansorge W."/>
            <person name="Unseld M."/>
            <person name="Fartmann B."/>
            <person name="Valle G."/>
            <person name="Bloecker H."/>
            <person name="Perez-Alonso M."/>
            <person name="Obermaier B."/>
            <person name="Delseny M."/>
            <person name="Boutry M."/>
            <person name="Grivell L.A."/>
            <person name="Mache R."/>
            <person name="Puigdomenech P."/>
            <person name="De Simone V."/>
            <person name="Choisne N."/>
            <person name="Artiguenave F."/>
            <person name="Robert C."/>
            <person name="Brottier P."/>
            <person name="Wincker P."/>
            <person name="Cattolico L."/>
            <person name="Weissenbach J."/>
            <person name="Saurin W."/>
            <person name="Quetier F."/>
            <person name="Schaefer M."/>
            <person name="Mueller-Auer S."/>
            <person name="Gabel C."/>
            <person name="Fuchs M."/>
            <person name="Benes V."/>
            <person name="Wurmbach E."/>
            <person name="Drzonek H."/>
            <person name="Erfle H."/>
            <person name="Jordan N."/>
            <person name="Bangert S."/>
            <person name="Wiedelmann R."/>
            <person name="Kranz H."/>
            <person name="Voss H."/>
            <person name="Holland R."/>
            <person name="Brandt P."/>
            <person name="Nyakatura G."/>
            <person name="Vezzi A."/>
            <person name="D'Angelo M."/>
            <person name="Pallavicini A."/>
            <person name="Toppo S."/>
            <person name="Simionati B."/>
            <person name="Conrad A."/>
            <person name="Hornischer K."/>
            <person name="Kauer G."/>
            <person name="Loehnert T.-H."/>
            <person name="Nordsiek G."/>
            <person name="Reichelt J."/>
            <person name="Scharfe M."/>
            <person name="Schoen O."/>
            <person name="Bargues M."/>
            <person name="Terol J."/>
            <person name="Climent J."/>
            <person name="Navarro P."/>
            <person name="Collado C."/>
            <person name="Perez-Perez A."/>
            <person name="Ottenwaelder B."/>
            <person name="Duchemin D."/>
            <person name="Cooke R."/>
            <person name="Laudie M."/>
            <person name="Berger-Llauro C."/>
            <person name="Purnelle B."/>
            <person name="Masuy D."/>
            <person name="de Haan M."/>
            <person name="Maarse A.C."/>
            <person name="Alcaraz J.-P."/>
            <person name="Cottet A."/>
            <person name="Casacuberta E."/>
            <person name="Monfort A."/>
            <person name="Argiriou A."/>
            <person name="Flores M."/>
            <person name="Liguori R."/>
            <person name="Vitale D."/>
            <person name="Mannhaupt G."/>
            <person name="Haase D."/>
            <person name="Schoof H."/>
            <person name="Rudd S."/>
            <person name="Zaccaria P."/>
            <person name="Mewes H.-W."/>
            <person name="Mayer K.F.X."/>
            <person name="Kaul S."/>
            <person name="Town C.D."/>
            <person name="Koo H.L."/>
            <person name="Tallon L.J."/>
            <person name="Jenkins J."/>
            <person name="Rooney T."/>
            <person name="Rizzo M."/>
            <person name="Walts A."/>
            <person name="Utterback T."/>
            <person name="Fujii C.Y."/>
            <person name="Shea T.P."/>
            <person name="Creasy T.H."/>
            <person name="Haas B."/>
            <person name="Maiti R."/>
            <person name="Wu D."/>
            <person name="Peterson J."/>
            <person name="Van Aken S."/>
            <person name="Pai G."/>
            <person name="Militscher J."/>
            <person name="Sellers P."/>
            <person name="Gill J.E."/>
            <person name="Feldblyum T.V."/>
            <person name="Preuss D."/>
            <person name="Lin X."/>
            <person name="Nierman W.C."/>
            <person name="Salzberg S.L."/>
            <person name="White O."/>
            <person name="Venter J.C."/>
            <person name="Fraser C.M."/>
            <person name="Kaneko T."/>
            <person name="Nakamura Y."/>
            <person name="Sato S."/>
            <person name="Kato T."/>
            <person name="Asamizu E."/>
            <person name="Sasamoto S."/>
            <person name="Kimura T."/>
            <person name="Idesawa K."/>
            <person name="Kawashima K."/>
            <person name="Kishida Y."/>
            <person name="Kiyokawa C."/>
            <person name="Kohara M."/>
            <person name="Matsumoto M."/>
            <person name="Matsuno A."/>
            <person name="Muraki A."/>
            <person name="Nakayama S."/>
            <person name="Nakazaki N."/>
            <person name="Shinpo S."/>
            <person name="Takeuchi C."/>
            <person name="Wada T."/>
            <person name="Watanabe A."/>
            <person name="Yamada M."/>
            <person name="Yasuda M."/>
            <person name="Tabata S."/>
        </authorList>
    </citation>
    <scope>NUCLEOTIDE SEQUENCE [LARGE SCALE GENOMIC DNA]</scope>
    <source>
        <strain>cv. Columbia</strain>
    </source>
</reference>
<reference key="3">
    <citation type="journal article" date="2017" name="Plant J.">
        <title>Araport11: a complete reannotation of the Arabidopsis thaliana reference genome.</title>
        <authorList>
            <person name="Cheng C.Y."/>
            <person name="Krishnakumar V."/>
            <person name="Chan A.P."/>
            <person name="Thibaud-Nissen F."/>
            <person name="Schobel S."/>
            <person name="Town C.D."/>
        </authorList>
    </citation>
    <scope>GENOME REANNOTATION</scope>
    <source>
        <strain>cv. Columbia</strain>
    </source>
</reference>
<reference key="4">
    <citation type="submission" date="2006-07" db="EMBL/GenBank/DDBJ databases">
        <title>Large-scale analysis of RIKEN Arabidopsis full-length (RAFL) cDNAs.</title>
        <authorList>
            <person name="Totoki Y."/>
            <person name="Seki M."/>
            <person name="Ishida J."/>
            <person name="Nakajima M."/>
            <person name="Enju A."/>
            <person name="Kamiya A."/>
            <person name="Narusaka M."/>
            <person name="Shin-i T."/>
            <person name="Nakagawa M."/>
            <person name="Sakamoto N."/>
            <person name="Oishi K."/>
            <person name="Kohara Y."/>
            <person name="Kobayashi M."/>
            <person name="Toyoda A."/>
            <person name="Sakaki Y."/>
            <person name="Sakurai T."/>
            <person name="Iida K."/>
            <person name="Akiyama K."/>
            <person name="Satou M."/>
            <person name="Toyoda T."/>
            <person name="Konagaya A."/>
            <person name="Carninci P."/>
            <person name="Kawai J."/>
            <person name="Hayashizaki Y."/>
            <person name="Shinozaki K."/>
        </authorList>
    </citation>
    <scope>NUCLEOTIDE SEQUENCE [LARGE SCALE MRNA]</scope>
    <source>
        <strain>cv. Columbia</strain>
    </source>
</reference>
<reference key="5">
    <citation type="journal article" date="2009" name="J. Proteomics">
        <title>Phosphoproteomic analysis of nuclei-enriched fractions from Arabidopsis thaliana.</title>
        <authorList>
            <person name="Jones A.M.E."/>
            <person name="MacLean D."/>
            <person name="Studholme D.J."/>
            <person name="Serna-Sanz A."/>
            <person name="Andreasson E."/>
            <person name="Rathjen J.P."/>
            <person name="Peck S.C."/>
        </authorList>
    </citation>
    <scope>IDENTIFICATION BY MASS SPECTROMETRY [LARGE SCALE ANALYSIS]</scope>
    <source>
        <strain>cv. Columbia</strain>
    </source>
</reference>
<reference key="6">
    <citation type="journal article" date="2009" name="Plant Physiol.">
        <title>Large-scale Arabidopsis phosphoproteome profiling reveals novel chloroplast kinase substrates and phosphorylation networks.</title>
        <authorList>
            <person name="Reiland S."/>
            <person name="Messerli G."/>
            <person name="Baerenfaller K."/>
            <person name="Gerrits B."/>
            <person name="Endler A."/>
            <person name="Grossmann J."/>
            <person name="Gruissem W."/>
            <person name="Baginsky S."/>
        </authorList>
    </citation>
    <scope>IDENTIFICATION BY MASS SPECTROMETRY [LARGE SCALE ANALYSIS]</scope>
</reference>
<reference key="7">
    <citation type="journal article" date="2009" name="Proc. Natl. Acad. Sci. U.S.A.">
        <title>Arabidopsis lipins mediate eukaryotic pathway of lipid metabolism and cope critically with phosphate starvation.</title>
        <authorList>
            <person name="Nakamura Y."/>
            <person name="Koizumi R."/>
            <person name="Shui G."/>
            <person name="Shimojima M."/>
            <person name="Wenk M.R."/>
            <person name="Ito T."/>
            <person name="Ohta H."/>
        </authorList>
    </citation>
    <scope>FUNCTION</scope>
    <scope>COFACTOR</scope>
    <scope>DISRUPTION PHENOTYPE</scope>
</reference>
<reference key="8">
    <citation type="journal article" date="2011" name="FEBS J.">
        <title>Lipins from plants are phosphatidate phosphatases that restore lipid synthesis in a pah1Delta mutant strain of Saccharomyces cerevisiae.</title>
        <authorList>
            <person name="Mietkiewska E."/>
            <person name="Siloto R.M."/>
            <person name="Dewald J."/>
            <person name="Shah S."/>
            <person name="Brindley D.N."/>
            <person name="Weselake R.J."/>
        </authorList>
    </citation>
    <scope>FUNCTION</scope>
    <scope>TISSUE SPECIFICITY</scope>
    <scope>DXDXT MOTIF</scope>
    <scope>MUTAGENESIS OF GLY-83; ASP-707; ASP-709 AND SER-752</scope>
</reference>
<organism>
    <name type="scientific">Arabidopsis thaliana</name>
    <name type="common">Mouse-ear cress</name>
    <dbReference type="NCBI Taxonomy" id="3702"/>
    <lineage>
        <taxon>Eukaryota</taxon>
        <taxon>Viridiplantae</taxon>
        <taxon>Streptophyta</taxon>
        <taxon>Embryophyta</taxon>
        <taxon>Tracheophyta</taxon>
        <taxon>Spermatophyta</taxon>
        <taxon>Magnoliopsida</taxon>
        <taxon>eudicotyledons</taxon>
        <taxon>Gunneridae</taxon>
        <taxon>Pentapetalae</taxon>
        <taxon>rosids</taxon>
        <taxon>malvids</taxon>
        <taxon>Brassicales</taxon>
        <taxon>Brassicaceae</taxon>
        <taxon>Camelineae</taxon>
        <taxon>Arabidopsis</taxon>
    </lineage>
</organism>
<accession>Q9SF47</accession>
<accession>D8L210</accession>
<accession>Q0WNF2</accession>
<proteinExistence type="evidence at protein level"/>
<comment type="function">
    <text evidence="2 3 4">Magnesium-dependent phosphatidate phosphatase which catalyzes the dephosphorylation of phosphatidate to yield diacylglycerol. Acts redundantly with PAH2 to repress phospholipid biosynthesis at the endoplasmic reticulum (ER). May function indirectly as repressor of multiple enzymes involved in phospholipid biosynthesis. Is involved in the pathway of galactolipid synthesis in the ER, which is required for the membrane lipid remodeling, an essential adaptation mechanism to cope with phosphate starvation.</text>
</comment>
<comment type="catalytic activity">
    <reaction>
        <text>a 1,2-diacyl-sn-glycero-3-phosphate + H2O = a 1,2-diacyl-sn-glycerol + phosphate</text>
        <dbReference type="Rhea" id="RHEA:27429"/>
        <dbReference type="ChEBI" id="CHEBI:15377"/>
        <dbReference type="ChEBI" id="CHEBI:17815"/>
        <dbReference type="ChEBI" id="CHEBI:43474"/>
        <dbReference type="ChEBI" id="CHEBI:58608"/>
        <dbReference type="EC" id="3.1.3.4"/>
    </reaction>
</comment>
<comment type="cofactor">
    <cofactor evidence="2 3">
        <name>Mg(2+)</name>
        <dbReference type="ChEBI" id="CHEBI:18420"/>
    </cofactor>
</comment>
<comment type="biophysicochemical properties">
    <phDependence>
        <text evidence="3">Optimum pH is 6.5.</text>
    </phDependence>
</comment>
<comment type="subcellular location">
    <subcellularLocation>
        <location>Cytoplasm</location>
        <location>Cytosol</location>
    </subcellularLocation>
</comment>
<comment type="tissue specificity">
    <text evidence="3 4">Expressed in roots, leaves, stems, flowers, siliques, embryos and mature seeds.</text>
</comment>
<comment type="domain">
    <text>Contains 1 Asp-Xaa-Asp-Xaa-Thr (DXDXT) motif, a catalytic motif essential for phosphatidate phosphatase activity.</text>
</comment>
<comment type="disruption phenotype">
    <text evidence="2 3">No visible phenotype under normal growth conditions, but the double mutants pah1 and pah2-1 show reduced growth.</text>
</comment>
<comment type="similarity">
    <text evidence="5">Belongs to the lipin family.</text>
</comment>
<comment type="sequence caution" evidence="5">
    <conflict type="miscellaneous discrepancy">
        <sequence resource="EMBL-CDS" id="ACT37431"/>
    </conflict>
    <text>Sequencing errors.</text>
</comment>
<gene>
    <name type="primary">PAH1</name>
    <name type="ordered locus">At3g09560</name>
    <name type="ORF">F11F8.14</name>
</gene>
<evidence type="ECO:0000256" key="1">
    <source>
        <dbReference type="SAM" id="MobiDB-lite"/>
    </source>
</evidence>
<evidence type="ECO:0000269" key="2">
    <source>
    </source>
</evidence>
<evidence type="ECO:0000269" key="3">
    <source>
    </source>
</evidence>
<evidence type="ECO:0000269" key="4">
    <source>
    </source>
</evidence>
<evidence type="ECO:0000305" key="5"/>